<name>RF1_FLAPJ</name>
<dbReference type="EMBL" id="AM398681">
    <property type="protein sequence ID" value="CAL43987.1"/>
    <property type="molecule type" value="Genomic_DNA"/>
</dbReference>
<dbReference type="RefSeq" id="WP_011964025.1">
    <property type="nucleotide sequence ID" value="NC_009613.3"/>
</dbReference>
<dbReference type="RefSeq" id="YP_001296789.1">
    <property type="nucleotide sequence ID" value="NC_009613.3"/>
</dbReference>
<dbReference type="SMR" id="A6H0W3"/>
<dbReference type="STRING" id="402612.FP1921"/>
<dbReference type="EnsemblBacteria" id="CAL43987">
    <property type="protein sequence ID" value="CAL43987"/>
    <property type="gene ID" value="FP1921"/>
</dbReference>
<dbReference type="GeneID" id="66551896"/>
<dbReference type="KEGG" id="fps:FP1921"/>
<dbReference type="PATRIC" id="fig|402612.5.peg.1946"/>
<dbReference type="eggNOG" id="COG0216">
    <property type="taxonomic scope" value="Bacteria"/>
</dbReference>
<dbReference type="HOGENOM" id="CLU_036856_0_1_10"/>
<dbReference type="OrthoDB" id="9806673at2"/>
<dbReference type="Proteomes" id="UP000006394">
    <property type="component" value="Chromosome"/>
</dbReference>
<dbReference type="GO" id="GO:0005737">
    <property type="term" value="C:cytoplasm"/>
    <property type="evidence" value="ECO:0007669"/>
    <property type="project" value="UniProtKB-SubCell"/>
</dbReference>
<dbReference type="GO" id="GO:0016149">
    <property type="term" value="F:translation release factor activity, codon specific"/>
    <property type="evidence" value="ECO:0007669"/>
    <property type="project" value="UniProtKB-UniRule"/>
</dbReference>
<dbReference type="FunFam" id="3.30.160.20:FF:000004">
    <property type="entry name" value="Peptide chain release factor 1"/>
    <property type="match status" value="1"/>
</dbReference>
<dbReference type="FunFam" id="3.30.70.1660:FF:000002">
    <property type="entry name" value="Peptide chain release factor 1"/>
    <property type="match status" value="1"/>
</dbReference>
<dbReference type="Gene3D" id="3.30.160.20">
    <property type="match status" value="1"/>
</dbReference>
<dbReference type="Gene3D" id="3.30.70.1660">
    <property type="match status" value="2"/>
</dbReference>
<dbReference type="Gene3D" id="6.10.140.1950">
    <property type="match status" value="1"/>
</dbReference>
<dbReference type="HAMAP" id="MF_00093">
    <property type="entry name" value="Rel_fac_1"/>
    <property type="match status" value="1"/>
</dbReference>
<dbReference type="InterPro" id="IPR005139">
    <property type="entry name" value="PCRF"/>
</dbReference>
<dbReference type="InterPro" id="IPR000352">
    <property type="entry name" value="Pep_chain_release_fac_I"/>
</dbReference>
<dbReference type="InterPro" id="IPR045853">
    <property type="entry name" value="Pep_chain_release_fac_I_sf"/>
</dbReference>
<dbReference type="InterPro" id="IPR050057">
    <property type="entry name" value="Prokaryotic/Mito_RF"/>
</dbReference>
<dbReference type="InterPro" id="IPR004373">
    <property type="entry name" value="RF-1"/>
</dbReference>
<dbReference type="NCBIfam" id="TIGR00019">
    <property type="entry name" value="prfA"/>
    <property type="match status" value="1"/>
</dbReference>
<dbReference type="NCBIfam" id="NF001859">
    <property type="entry name" value="PRK00591.1"/>
    <property type="match status" value="1"/>
</dbReference>
<dbReference type="PANTHER" id="PTHR43804">
    <property type="entry name" value="LD18447P"/>
    <property type="match status" value="1"/>
</dbReference>
<dbReference type="PANTHER" id="PTHR43804:SF7">
    <property type="entry name" value="LD18447P"/>
    <property type="match status" value="1"/>
</dbReference>
<dbReference type="Pfam" id="PF03462">
    <property type="entry name" value="PCRF"/>
    <property type="match status" value="1"/>
</dbReference>
<dbReference type="Pfam" id="PF00472">
    <property type="entry name" value="RF-1"/>
    <property type="match status" value="1"/>
</dbReference>
<dbReference type="SMART" id="SM00937">
    <property type="entry name" value="PCRF"/>
    <property type="match status" value="1"/>
</dbReference>
<dbReference type="SUPFAM" id="SSF75620">
    <property type="entry name" value="Release factor"/>
    <property type="match status" value="1"/>
</dbReference>
<evidence type="ECO:0000255" key="1">
    <source>
        <dbReference type="HAMAP-Rule" id="MF_00093"/>
    </source>
</evidence>
<keyword id="KW-0963">Cytoplasm</keyword>
<keyword id="KW-0488">Methylation</keyword>
<keyword id="KW-0648">Protein biosynthesis</keyword>
<keyword id="KW-1185">Reference proteome</keyword>
<comment type="function">
    <text evidence="1">Peptide chain release factor 1 directs the termination of translation in response to the peptide chain termination codons UAG and UAA.</text>
</comment>
<comment type="subcellular location">
    <subcellularLocation>
        <location evidence="1">Cytoplasm</location>
    </subcellularLocation>
</comment>
<comment type="PTM">
    <text evidence="1">Methylated by PrmC. Methylation increases the termination efficiency of RF1.</text>
</comment>
<comment type="similarity">
    <text evidence="1">Belongs to the prokaryotic/mitochondrial release factor family.</text>
</comment>
<organism>
    <name type="scientific">Flavobacterium psychrophilum (strain ATCC 49511 / DSM 21280 / CIP 103535 / JIP02/86)</name>
    <dbReference type="NCBI Taxonomy" id="402612"/>
    <lineage>
        <taxon>Bacteria</taxon>
        <taxon>Pseudomonadati</taxon>
        <taxon>Bacteroidota</taxon>
        <taxon>Flavobacteriia</taxon>
        <taxon>Flavobacteriales</taxon>
        <taxon>Flavobacteriaceae</taxon>
        <taxon>Flavobacterium</taxon>
    </lineage>
</organism>
<gene>
    <name evidence="1" type="primary">prfA</name>
    <name type="ordered locus">FP1921</name>
</gene>
<proteinExistence type="inferred from homology"/>
<protein>
    <recommendedName>
        <fullName evidence="1">Peptide chain release factor 1</fullName>
        <shortName evidence="1">RF-1</shortName>
    </recommendedName>
</protein>
<accession>A6H0W3</accession>
<feature type="chain" id="PRO_1000004890" description="Peptide chain release factor 1">
    <location>
        <begin position="1"/>
        <end position="357"/>
    </location>
</feature>
<feature type="modified residue" description="N5-methylglutamine" evidence="1">
    <location>
        <position position="233"/>
    </location>
</feature>
<sequence>MLDRLQIIKQKFDEISDLIIQPDVIADQKRYVALNQEYKGLKSLVEKRDEYVILMANIEEANEIIADGSDADMVEMAKMQLEEAKERLPELEEEIKFLLIPKDAEDAKNVMVEIRAGTGGDEASIFAGDLFRMYTKYCENRGWRTSVVDMNEGTSGGFKEVIFEVTGEDVYGTLKFEAGVHRVQRVPQTETQGRVHTSAATVMVLPEAEEFDVQIDMNDVRVDFFCSSGPGGQSVNTTKSAVRLTHIPTGLVAQCQDQKSQHKNKDKAFGVLRSRLYEQELAKKQADDAVKRTSQVSSGDRSAKIRTYNYSQGRVTDHRIGLDVFDMDGVMNGKIQKFVDELQLVNNMEKLKESEIF</sequence>
<reference key="1">
    <citation type="journal article" date="2007" name="Nat. Biotechnol.">
        <title>Complete genome sequence of the fish pathogen Flavobacterium psychrophilum.</title>
        <authorList>
            <person name="Duchaud E."/>
            <person name="Boussaha M."/>
            <person name="Loux V."/>
            <person name="Bernardet J.-F."/>
            <person name="Michel C."/>
            <person name="Kerouault B."/>
            <person name="Mondot S."/>
            <person name="Nicolas P."/>
            <person name="Bossy R."/>
            <person name="Caron C."/>
            <person name="Bessieres P."/>
            <person name="Gibrat J.-F."/>
            <person name="Claverol S."/>
            <person name="Dumetz F."/>
            <person name="Le Henaff M."/>
            <person name="Benmansour A."/>
        </authorList>
    </citation>
    <scope>NUCLEOTIDE SEQUENCE [LARGE SCALE GENOMIC DNA]</scope>
    <source>
        <strain>ATCC 49511 / DSM 21280 / CIP 103535 / JIP02/86</strain>
    </source>
</reference>